<sequence>MSLCGARANAKMMAAYNGGTSAAAAGHHHHHHHHLPHLPPPHLHHHHHPQHHLHPGSAAAVHPVQQHTSSAAAAAAAAAAAAAMLNPGQQQPYFPSPAPGQAPGPAAAAPAQVQAAAAATVKAHHHQHSHHPQQQLDIEPDRPIGYGAFGVVWSVTDPRDGKRVALKKMPNVFQNLVSCKRVFRELKMLCFFKHDNVLSALDILQPPHIDYFEEIYVVTELMQSDLHKIIVSPQPLSSDHVKVFLYQILRGLKYLHSAGILHRDIKPGNLLVNSNCVLKICDFGLARVEELDESRHMTQEVVTQYYRAPEILMGSRHYSNAIDIWSVGCIFAELLGRRILFQAQSPIQQLDLITDLLGTPSLEAMRTACEGAKAHILRGPHKQPSLPVLYTLSSQATHEAVHLLCRMLVFDPSKRISAKDALAHPYLDEGRLRYHTCMCKCCFSTSTGRVYTSDFEPVTNPKFDDTFEKNLSSVRQVKEIIHQFILEQQKGNRVPLCINPQSAAFKSFISSTVAQPSEMPPSPLVWE</sequence>
<accession>Q9UBE8</accession>
<accession>B2RCX1</accession>
<accession>Q2PNI9</accession>
<accession>Q6P2A3</accession>
<name>NLK_HUMAN</name>
<gene>
    <name type="primary">NLK</name>
    <name evidence="23" type="synonym">LAK1</name>
</gene>
<dbReference type="EC" id="2.7.11.24" evidence="21"/>
<dbReference type="EMBL" id="AF197898">
    <property type="protein sequence ID" value="AAF04857.1"/>
    <property type="status" value="ALT_INIT"/>
    <property type="molecule type" value="mRNA"/>
</dbReference>
<dbReference type="EMBL" id="AF180819">
    <property type="protein sequence ID" value="AAD56013.1"/>
    <property type="status" value="ALT_INIT"/>
    <property type="molecule type" value="mRNA"/>
</dbReference>
<dbReference type="EMBL" id="AK315315">
    <property type="protein sequence ID" value="BAG37718.1"/>
    <property type="status" value="ALT_INIT"/>
    <property type="molecule type" value="mRNA"/>
</dbReference>
<dbReference type="EMBL" id="DQ316259">
    <property type="protein sequence ID" value="ABC40748.1"/>
    <property type="status" value="ALT_INIT"/>
    <property type="molecule type" value="Genomic_DNA"/>
</dbReference>
<dbReference type="EMBL" id="BC064663">
    <property type="protein sequence ID" value="AAH64663.2"/>
    <property type="molecule type" value="mRNA"/>
</dbReference>
<dbReference type="CCDS" id="CCDS11224.2"/>
<dbReference type="RefSeq" id="NP_057315.3">
    <property type="nucleotide sequence ID" value="NM_016231.4"/>
</dbReference>
<dbReference type="SMR" id="Q9UBE8"/>
<dbReference type="BioGRID" id="119685">
    <property type="interactions" value="70"/>
</dbReference>
<dbReference type="CORUM" id="Q9UBE8"/>
<dbReference type="FunCoup" id="Q9UBE8">
    <property type="interactions" value="5493"/>
</dbReference>
<dbReference type="IntAct" id="Q9UBE8">
    <property type="interactions" value="43"/>
</dbReference>
<dbReference type="MINT" id="Q9UBE8"/>
<dbReference type="STRING" id="9606.ENSP00000384625"/>
<dbReference type="BindingDB" id="Q9UBE8"/>
<dbReference type="ChEMBL" id="CHEMBL5364"/>
<dbReference type="DrugCentral" id="Q9UBE8"/>
<dbReference type="GuidetoPHARMACOLOGY" id="2125"/>
<dbReference type="iPTMnet" id="Q9UBE8"/>
<dbReference type="PhosphoSitePlus" id="Q9UBE8"/>
<dbReference type="BioMuta" id="NLK"/>
<dbReference type="DMDM" id="262527551"/>
<dbReference type="CPTAC" id="CPTAC-2835"/>
<dbReference type="CPTAC" id="CPTAC-2964"/>
<dbReference type="jPOST" id="Q9UBE8"/>
<dbReference type="MassIVE" id="Q9UBE8"/>
<dbReference type="PaxDb" id="9606-ENSP00000384625"/>
<dbReference type="PeptideAtlas" id="Q9UBE8"/>
<dbReference type="ProteomicsDB" id="83953"/>
<dbReference type="Antibodypedia" id="13947">
    <property type="antibodies" value="379 antibodies from 38 providers"/>
</dbReference>
<dbReference type="DNASU" id="51701"/>
<dbReference type="Ensembl" id="ENST00000407008.8">
    <property type="protein sequence ID" value="ENSP00000384625.3"/>
    <property type="gene ID" value="ENSG00000087095.13"/>
</dbReference>
<dbReference type="GeneID" id="51701"/>
<dbReference type="KEGG" id="hsa:51701"/>
<dbReference type="MANE-Select" id="ENST00000407008.8">
    <property type="protein sequence ID" value="ENSP00000384625.3"/>
    <property type="RefSeq nucleotide sequence ID" value="NM_016231.5"/>
    <property type="RefSeq protein sequence ID" value="NP_057315.3"/>
</dbReference>
<dbReference type="UCSC" id="uc010crj.4">
    <property type="organism name" value="human"/>
</dbReference>
<dbReference type="AGR" id="HGNC:29858"/>
<dbReference type="CTD" id="51701"/>
<dbReference type="DisGeNET" id="51701"/>
<dbReference type="GeneCards" id="NLK"/>
<dbReference type="HGNC" id="HGNC:29858">
    <property type="gene designation" value="NLK"/>
</dbReference>
<dbReference type="HPA" id="ENSG00000087095">
    <property type="expression patterns" value="Tissue enhanced (retina)"/>
</dbReference>
<dbReference type="MIM" id="609476">
    <property type="type" value="gene"/>
</dbReference>
<dbReference type="neXtProt" id="NX_Q9UBE8"/>
<dbReference type="OpenTargets" id="ENSG00000087095"/>
<dbReference type="PharmGKB" id="PA134914500"/>
<dbReference type="VEuPathDB" id="HostDB:ENSG00000087095"/>
<dbReference type="eggNOG" id="KOG0664">
    <property type="taxonomic scope" value="Eukaryota"/>
</dbReference>
<dbReference type="GeneTree" id="ENSGT00940000158363"/>
<dbReference type="InParanoid" id="Q9UBE8"/>
<dbReference type="OMA" id="QNMTHEV"/>
<dbReference type="OrthoDB" id="192887at2759"/>
<dbReference type="PAN-GO" id="Q9UBE8">
    <property type="GO annotations" value="4 GO annotations based on evolutionary models"/>
</dbReference>
<dbReference type="PhylomeDB" id="Q9UBE8"/>
<dbReference type="TreeFam" id="TF315210"/>
<dbReference type="PathwayCommons" id="Q9UBE8"/>
<dbReference type="Reactome" id="R-HSA-4086398">
    <property type="pathway name" value="Ca2+ pathway"/>
</dbReference>
<dbReference type="SignaLink" id="Q9UBE8"/>
<dbReference type="SIGNOR" id="Q9UBE8"/>
<dbReference type="BioGRID-ORCS" id="51701">
    <property type="hits" value="18 hits in 1192 CRISPR screens"/>
</dbReference>
<dbReference type="CD-CODE" id="03E7CE7B">
    <property type="entry name" value="NEDD4 condensates"/>
</dbReference>
<dbReference type="ChiTaRS" id="NLK">
    <property type="organism name" value="human"/>
</dbReference>
<dbReference type="GeneWiki" id="NLK"/>
<dbReference type="GenomeRNAi" id="51701"/>
<dbReference type="Pharos" id="Q9UBE8">
    <property type="development level" value="Tchem"/>
</dbReference>
<dbReference type="PRO" id="PR:Q9UBE8"/>
<dbReference type="Proteomes" id="UP000005640">
    <property type="component" value="Chromosome 17"/>
</dbReference>
<dbReference type="RNAct" id="Q9UBE8">
    <property type="molecule type" value="protein"/>
</dbReference>
<dbReference type="Bgee" id="ENSG00000087095">
    <property type="expression patterns" value="Expressed in middle temporal gyrus and 189 other cell types or tissues"/>
</dbReference>
<dbReference type="ExpressionAtlas" id="Q9UBE8">
    <property type="expression patterns" value="baseline and differential"/>
</dbReference>
<dbReference type="GO" id="GO:0005737">
    <property type="term" value="C:cytoplasm"/>
    <property type="evidence" value="ECO:0000318"/>
    <property type="project" value="GO_Central"/>
</dbReference>
<dbReference type="GO" id="GO:0005829">
    <property type="term" value="C:cytosol"/>
    <property type="evidence" value="ECO:0000304"/>
    <property type="project" value="Reactome"/>
</dbReference>
<dbReference type="GO" id="GO:0005654">
    <property type="term" value="C:nucleoplasm"/>
    <property type="evidence" value="ECO:0000304"/>
    <property type="project" value="Reactome"/>
</dbReference>
<dbReference type="GO" id="GO:0005634">
    <property type="term" value="C:nucleus"/>
    <property type="evidence" value="ECO:0000250"/>
    <property type="project" value="UniProtKB"/>
</dbReference>
<dbReference type="GO" id="GO:0005524">
    <property type="term" value="F:ATP binding"/>
    <property type="evidence" value="ECO:0000250"/>
    <property type="project" value="UniProtKB"/>
</dbReference>
<dbReference type="GO" id="GO:0140297">
    <property type="term" value="F:DNA-binding transcription factor binding"/>
    <property type="evidence" value="ECO:0000353"/>
    <property type="project" value="UniProtKB"/>
</dbReference>
<dbReference type="GO" id="GO:0000287">
    <property type="term" value="F:magnesium ion binding"/>
    <property type="evidence" value="ECO:0000250"/>
    <property type="project" value="UniProtKB"/>
</dbReference>
<dbReference type="GO" id="GO:0004707">
    <property type="term" value="F:MAP kinase activity"/>
    <property type="evidence" value="ECO:0000250"/>
    <property type="project" value="UniProtKB"/>
</dbReference>
<dbReference type="GO" id="GO:0004672">
    <property type="term" value="F:protein kinase activity"/>
    <property type="evidence" value="ECO:0000304"/>
    <property type="project" value="ProtInc"/>
</dbReference>
<dbReference type="GO" id="GO:0106310">
    <property type="term" value="F:protein serine kinase activity"/>
    <property type="evidence" value="ECO:0007669"/>
    <property type="project" value="RHEA"/>
</dbReference>
<dbReference type="GO" id="GO:0004674">
    <property type="term" value="F:protein serine/threonine kinase activity"/>
    <property type="evidence" value="ECO:0000314"/>
    <property type="project" value="UniProtKB"/>
</dbReference>
<dbReference type="GO" id="GO:0042169">
    <property type="term" value="F:SH2 domain binding"/>
    <property type="evidence" value="ECO:0000250"/>
    <property type="project" value="UniProtKB"/>
</dbReference>
<dbReference type="GO" id="GO:0031625">
    <property type="term" value="F:ubiquitin protein ligase binding"/>
    <property type="evidence" value="ECO:0000353"/>
    <property type="project" value="UniProtKB"/>
</dbReference>
<dbReference type="GO" id="GO:0071470">
    <property type="term" value="P:cellular response to osmotic stress"/>
    <property type="evidence" value="ECO:0000314"/>
    <property type="project" value="UniProt"/>
</dbReference>
<dbReference type="GO" id="GO:0035556">
    <property type="term" value="P:intracellular signal transduction"/>
    <property type="evidence" value="ECO:0000250"/>
    <property type="project" value="UniProtKB"/>
</dbReference>
<dbReference type="GO" id="GO:1904262">
    <property type="term" value="P:negative regulation of TORC1 signaling"/>
    <property type="evidence" value="ECO:0000314"/>
    <property type="project" value="UniProtKB"/>
</dbReference>
<dbReference type="GO" id="GO:0030178">
    <property type="term" value="P:negative regulation of Wnt signaling pathway"/>
    <property type="evidence" value="ECO:0000250"/>
    <property type="project" value="UniProtKB"/>
</dbReference>
<dbReference type="GO" id="GO:0018107">
    <property type="term" value="P:peptidyl-threonine phosphorylation"/>
    <property type="evidence" value="ECO:0000250"/>
    <property type="project" value="UniProtKB"/>
</dbReference>
<dbReference type="GO" id="GO:1904894">
    <property type="term" value="P:positive regulation of receptor signaling pathway via STAT"/>
    <property type="evidence" value="ECO:0000250"/>
    <property type="project" value="UniProtKB"/>
</dbReference>
<dbReference type="GO" id="GO:0006468">
    <property type="term" value="P:protein phosphorylation"/>
    <property type="evidence" value="ECO:0000250"/>
    <property type="project" value="UniProtKB"/>
</dbReference>
<dbReference type="GO" id="GO:0050821">
    <property type="term" value="P:protein stabilization"/>
    <property type="evidence" value="ECO:0000314"/>
    <property type="project" value="UniProtKB"/>
</dbReference>
<dbReference type="GO" id="GO:0006355">
    <property type="term" value="P:regulation of DNA-templated transcription"/>
    <property type="evidence" value="ECO:0000250"/>
    <property type="project" value="UniProtKB"/>
</dbReference>
<dbReference type="GO" id="GO:0007179">
    <property type="term" value="P:transforming growth factor beta receptor signaling pathway"/>
    <property type="evidence" value="ECO:0000315"/>
    <property type="project" value="UniProtKB"/>
</dbReference>
<dbReference type="GO" id="GO:0007223">
    <property type="term" value="P:Wnt signaling pathway, calcium modulating pathway"/>
    <property type="evidence" value="ECO:0000304"/>
    <property type="project" value="Reactome"/>
</dbReference>
<dbReference type="CDD" id="cd07853">
    <property type="entry name" value="STKc_NLK"/>
    <property type="match status" value="1"/>
</dbReference>
<dbReference type="FunFam" id="1.10.510.10:FF:000162">
    <property type="entry name" value="Mitogen-activated protein kinase"/>
    <property type="match status" value="1"/>
</dbReference>
<dbReference type="FunFam" id="3.30.200.20:FF:000164">
    <property type="entry name" value="Mitogen-activated protein kinase"/>
    <property type="match status" value="1"/>
</dbReference>
<dbReference type="Gene3D" id="3.30.200.20">
    <property type="entry name" value="Phosphorylase Kinase, domain 1"/>
    <property type="match status" value="1"/>
</dbReference>
<dbReference type="Gene3D" id="1.10.510.10">
    <property type="entry name" value="Transferase(Phosphotransferase) domain 1"/>
    <property type="match status" value="1"/>
</dbReference>
<dbReference type="InterPro" id="IPR011009">
    <property type="entry name" value="Kinase-like_dom_sf"/>
</dbReference>
<dbReference type="InterPro" id="IPR050117">
    <property type="entry name" value="MAP_kinase"/>
</dbReference>
<dbReference type="InterPro" id="IPR003527">
    <property type="entry name" value="MAP_kinase_CS"/>
</dbReference>
<dbReference type="InterPro" id="IPR000719">
    <property type="entry name" value="Prot_kinase_dom"/>
</dbReference>
<dbReference type="InterPro" id="IPR017441">
    <property type="entry name" value="Protein_kinase_ATP_BS"/>
</dbReference>
<dbReference type="InterPro" id="IPR008271">
    <property type="entry name" value="Ser/Thr_kinase_AS"/>
</dbReference>
<dbReference type="PANTHER" id="PTHR24055">
    <property type="entry name" value="MITOGEN-ACTIVATED PROTEIN KINASE"/>
    <property type="match status" value="1"/>
</dbReference>
<dbReference type="Pfam" id="PF00069">
    <property type="entry name" value="Pkinase"/>
    <property type="match status" value="1"/>
</dbReference>
<dbReference type="SMART" id="SM00220">
    <property type="entry name" value="S_TKc"/>
    <property type="match status" value="1"/>
</dbReference>
<dbReference type="SUPFAM" id="SSF56112">
    <property type="entry name" value="Protein kinase-like (PK-like)"/>
    <property type="match status" value="1"/>
</dbReference>
<dbReference type="PROSITE" id="PS01351">
    <property type="entry name" value="MAPK"/>
    <property type="match status" value="1"/>
</dbReference>
<dbReference type="PROSITE" id="PS00107">
    <property type="entry name" value="PROTEIN_KINASE_ATP"/>
    <property type="match status" value="1"/>
</dbReference>
<dbReference type="PROSITE" id="PS50011">
    <property type="entry name" value="PROTEIN_KINASE_DOM"/>
    <property type="match status" value="1"/>
</dbReference>
<dbReference type="PROSITE" id="PS00108">
    <property type="entry name" value="PROTEIN_KINASE_ST"/>
    <property type="match status" value="1"/>
</dbReference>
<protein>
    <recommendedName>
        <fullName>Serine/threonine-protein kinase NLK</fullName>
        <ecNumber evidence="21">2.7.11.24</ecNumber>
    </recommendedName>
    <alternativeName>
        <fullName>Nemo-like kinase</fullName>
    </alternativeName>
    <alternativeName>
        <fullName>Protein LAK1</fullName>
    </alternativeName>
</protein>
<feature type="chain" id="PRO_0000186336" description="Serine/threonine-protein kinase NLK">
    <location>
        <begin position="1"/>
        <end position="527"/>
    </location>
</feature>
<feature type="domain" description="Protein kinase" evidence="3">
    <location>
        <begin position="138"/>
        <end position="427"/>
    </location>
</feature>
<feature type="region of interest" description="Required for interaction with TAB2" evidence="2">
    <location>
        <begin position="1"/>
        <end position="304"/>
    </location>
</feature>
<feature type="region of interest" description="Sufficient for interaction with DAPK3" evidence="18">
    <location>
        <begin position="1"/>
        <end position="125"/>
    </location>
</feature>
<feature type="region of interest" description="Disordered" evidence="5">
    <location>
        <begin position="22"/>
        <end position="72"/>
    </location>
</feature>
<feature type="region of interest" description="Disordered" evidence="5">
    <location>
        <begin position="90"/>
        <end position="140"/>
    </location>
</feature>
<feature type="region of interest" description="Sufficient for interaction with DAPK3" evidence="18">
    <location>
        <begin position="124"/>
        <end position="416"/>
    </location>
</feature>
<feature type="region of interest" description="Required for homodimerization and kinase activation and localization to the nucleus" evidence="2">
    <location>
        <begin position="428"/>
        <end position="527"/>
    </location>
</feature>
<feature type="region of interest" description="Required for interaction with TAB2" evidence="2">
    <location>
        <begin position="434"/>
        <end position="527"/>
    </location>
</feature>
<feature type="short sequence motif" description="TQE">
    <location>
        <begin position="298"/>
        <end position="300"/>
    </location>
</feature>
<feature type="compositionally biased region" description="Basic residues" evidence="5">
    <location>
        <begin position="26"/>
        <end position="54"/>
    </location>
</feature>
<feature type="compositionally biased region" description="Low complexity" evidence="5">
    <location>
        <begin position="103"/>
        <end position="119"/>
    </location>
</feature>
<feature type="compositionally biased region" description="Basic residues" evidence="5">
    <location>
        <begin position="122"/>
        <end position="131"/>
    </location>
</feature>
<feature type="active site" description="Proton acceptor" evidence="3 4">
    <location>
        <position position="264"/>
    </location>
</feature>
<feature type="binding site" evidence="3">
    <location>
        <begin position="144"/>
        <end position="152"/>
    </location>
    <ligand>
        <name>ATP</name>
        <dbReference type="ChEBI" id="CHEBI:30616"/>
    </ligand>
</feature>
<feature type="binding site" evidence="22">
    <location>
        <position position="167"/>
    </location>
    <ligand>
        <name>ATP</name>
        <dbReference type="ChEBI" id="CHEBI:30616"/>
    </ligand>
</feature>
<feature type="modified residue" description="Phosphothreonine; by autocatalysis" evidence="25 26 27">
    <location>
        <position position="298"/>
    </location>
</feature>
<feature type="modified residue" description="Phosphoserine" evidence="25">
    <location>
        <position position="522"/>
    </location>
</feature>
<feature type="sequence variant" id="VAR_019549" description="In dbSNP:rs11871287.">
    <original>V</original>
    <variation>A</variation>
    <location>
        <position position="177"/>
    </location>
</feature>
<feature type="sequence variant" id="VAR_042273" description="In a glioblastoma multiforme sample; somatic mutation." evidence="13">
    <original>A</original>
    <variation>T</variation>
    <location>
        <position position="343"/>
    </location>
</feature>
<feature type="mutagenesis site" description="Abrogates kinase activity." evidence="15">
    <original>K</original>
    <variation>N</variation>
    <location>
        <position position="167"/>
    </location>
</feature>
<feature type="sequence conflict" description="In Ref. 5; AAH64663." evidence="22" ref="5">
    <original>A</original>
    <variation>T</variation>
    <location>
        <position position="25"/>
    </location>
</feature>
<evidence type="ECO:0000250" key="1"/>
<evidence type="ECO:0000250" key="2">
    <source>
        <dbReference type="UniProtKB" id="O54949"/>
    </source>
</evidence>
<evidence type="ECO:0000255" key="3">
    <source>
        <dbReference type="PROSITE-ProRule" id="PRU00159"/>
    </source>
</evidence>
<evidence type="ECO:0000255" key="4">
    <source>
        <dbReference type="PROSITE-ProRule" id="PRU10027"/>
    </source>
</evidence>
<evidence type="ECO:0000256" key="5">
    <source>
        <dbReference type="SAM" id="MobiDB-lite"/>
    </source>
</evidence>
<evidence type="ECO:0000269" key="6">
    <source>
    </source>
</evidence>
<evidence type="ECO:0000269" key="7">
    <source>
    </source>
</evidence>
<evidence type="ECO:0000269" key="8">
    <source>
    </source>
</evidence>
<evidence type="ECO:0000269" key="9">
    <source>
    </source>
</evidence>
<evidence type="ECO:0000269" key="10">
    <source>
    </source>
</evidence>
<evidence type="ECO:0000269" key="11">
    <source>
    </source>
</evidence>
<evidence type="ECO:0000269" key="12">
    <source>
    </source>
</evidence>
<evidence type="ECO:0000269" key="13">
    <source>
    </source>
</evidence>
<evidence type="ECO:0000269" key="14">
    <source>
    </source>
</evidence>
<evidence type="ECO:0000269" key="15">
    <source>
    </source>
</evidence>
<evidence type="ECO:0000269" key="16">
    <source>
    </source>
</evidence>
<evidence type="ECO:0000269" key="17">
    <source>
    </source>
</evidence>
<evidence type="ECO:0000269" key="18">
    <source>
    </source>
</evidence>
<evidence type="ECO:0000269" key="19">
    <source>
    </source>
</evidence>
<evidence type="ECO:0000269" key="20">
    <source>
    </source>
</evidence>
<evidence type="ECO:0000269" key="21">
    <source>
    </source>
</evidence>
<evidence type="ECO:0000305" key="22"/>
<evidence type="ECO:0000312" key="23">
    <source>
        <dbReference type="EMBL" id="AAD56013.1"/>
    </source>
</evidence>
<evidence type="ECO:0000312" key="24">
    <source>
        <dbReference type="EMBL" id="AAF04857.1"/>
    </source>
</evidence>
<evidence type="ECO:0007744" key="25">
    <source>
    </source>
</evidence>
<evidence type="ECO:0007744" key="26">
    <source>
    </source>
</evidence>
<evidence type="ECO:0007744" key="27">
    <source>
    </source>
</evidence>
<proteinExistence type="evidence at protein level"/>
<reference evidence="24" key="1">
    <citation type="journal article" date="2000" name="Gene">
        <title>Characterization of the Fugu rubripes NLK and FN5 genes flanking the NF1 (Neurofibromatosis type 1) gene in the 5' direction and mapping of the human counterparts.</title>
        <authorList>
            <person name="Kehrer-Sawatzki H."/>
            <person name="Moschgath E."/>
            <person name="Maier C."/>
            <person name="Legius E."/>
            <person name="Elgar G."/>
            <person name="Krone W."/>
        </authorList>
    </citation>
    <scope>NUCLEOTIDE SEQUENCE [MRNA]</scope>
    <source>
        <tissue evidence="6">Placenta</tissue>
    </source>
</reference>
<reference evidence="23" key="2">
    <citation type="submission" date="1999-08" db="EMBL/GenBank/DDBJ databases">
        <title>Cloning of human LAK1 cDNA.</title>
        <authorList>
            <person name="Wang C."/>
            <person name="Lo H."/>
        </authorList>
    </citation>
    <scope>NUCLEOTIDE SEQUENCE [MRNA]</scope>
    <source>
        <tissue>T-cell</tissue>
    </source>
</reference>
<reference key="3">
    <citation type="journal article" date="2004" name="Nat. Genet.">
        <title>Complete sequencing and characterization of 21,243 full-length human cDNAs.</title>
        <authorList>
            <person name="Ota T."/>
            <person name="Suzuki Y."/>
            <person name="Nishikawa T."/>
            <person name="Otsuki T."/>
            <person name="Sugiyama T."/>
            <person name="Irie R."/>
            <person name="Wakamatsu A."/>
            <person name="Hayashi K."/>
            <person name="Sato H."/>
            <person name="Nagai K."/>
            <person name="Kimura K."/>
            <person name="Makita H."/>
            <person name="Sekine M."/>
            <person name="Obayashi M."/>
            <person name="Nishi T."/>
            <person name="Shibahara T."/>
            <person name="Tanaka T."/>
            <person name="Ishii S."/>
            <person name="Yamamoto J."/>
            <person name="Saito K."/>
            <person name="Kawai Y."/>
            <person name="Isono Y."/>
            <person name="Nakamura Y."/>
            <person name="Nagahari K."/>
            <person name="Murakami K."/>
            <person name="Yasuda T."/>
            <person name="Iwayanagi T."/>
            <person name="Wagatsuma M."/>
            <person name="Shiratori A."/>
            <person name="Sudo H."/>
            <person name="Hosoiri T."/>
            <person name="Kaku Y."/>
            <person name="Kodaira H."/>
            <person name="Kondo H."/>
            <person name="Sugawara M."/>
            <person name="Takahashi M."/>
            <person name="Kanda K."/>
            <person name="Yokoi T."/>
            <person name="Furuya T."/>
            <person name="Kikkawa E."/>
            <person name="Omura Y."/>
            <person name="Abe K."/>
            <person name="Kamihara K."/>
            <person name="Katsuta N."/>
            <person name="Sato K."/>
            <person name="Tanikawa M."/>
            <person name="Yamazaki M."/>
            <person name="Ninomiya K."/>
            <person name="Ishibashi T."/>
            <person name="Yamashita H."/>
            <person name="Murakawa K."/>
            <person name="Fujimori K."/>
            <person name="Tanai H."/>
            <person name="Kimata M."/>
            <person name="Watanabe M."/>
            <person name="Hiraoka S."/>
            <person name="Chiba Y."/>
            <person name="Ishida S."/>
            <person name="Ono Y."/>
            <person name="Takiguchi S."/>
            <person name="Watanabe S."/>
            <person name="Yosida M."/>
            <person name="Hotuta T."/>
            <person name="Kusano J."/>
            <person name="Kanehori K."/>
            <person name="Takahashi-Fujii A."/>
            <person name="Hara H."/>
            <person name="Tanase T.-O."/>
            <person name="Nomura Y."/>
            <person name="Togiya S."/>
            <person name="Komai F."/>
            <person name="Hara R."/>
            <person name="Takeuchi K."/>
            <person name="Arita M."/>
            <person name="Imose N."/>
            <person name="Musashino K."/>
            <person name="Yuuki H."/>
            <person name="Oshima A."/>
            <person name="Sasaki N."/>
            <person name="Aotsuka S."/>
            <person name="Yoshikawa Y."/>
            <person name="Matsunawa H."/>
            <person name="Ichihara T."/>
            <person name="Shiohata N."/>
            <person name="Sano S."/>
            <person name="Moriya S."/>
            <person name="Momiyama H."/>
            <person name="Satoh N."/>
            <person name="Takami S."/>
            <person name="Terashima Y."/>
            <person name="Suzuki O."/>
            <person name="Nakagawa S."/>
            <person name="Senoh A."/>
            <person name="Mizoguchi H."/>
            <person name="Goto Y."/>
            <person name="Shimizu F."/>
            <person name="Wakebe H."/>
            <person name="Hishigaki H."/>
            <person name="Watanabe T."/>
            <person name="Sugiyama A."/>
            <person name="Takemoto M."/>
            <person name="Kawakami B."/>
            <person name="Yamazaki M."/>
            <person name="Watanabe K."/>
            <person name="Kumagai A."/>
            <person name="Itakura S."/>
            <person name="Fukuzumi Y."/>
            <person name="Fujimori Y."/>
            <person name="Komiyama M."/>
            <person name="Tashiro H."/>
            <person name="Tanigami A."/>
            <person name="Fujiwara T."/>
            <person name="Ono T."/>
            <person name="Yamada K."/>
            <person name="Fujii Y."/>
            <person name="Ozaki K."/>
            <person name="Hirao M."/>
            <person name="Ohmori Y."/>
            <person name="Kawabata A."/>
            <person name="Hikiji T."/>
            <person name="Kobatake N."/>
            <person name="Inagaki H."/>
            <person name="Ikema Y."/>
            <person name="Okamoto S."/>
            <person name="Okitani R."/>
            <person name="Kawakami T."/>
            <person name="Noguchi S."/>
            <person name="Itoh T."/>
            <person name="Shigeta K."/>
            <person name="Senba T."/>
            <person name="Matsumura K."/>
            <person name="Nakajima Y."/>
            <person name="Mizuno T."/>
            <person name="Morinaga M."/>
            <person name="Sasaki M."/>
            <person name="Togashi T."/>
            <person name="Oyama M."/>
            <person name="Hata H."/>
            <person name="Watanabe M."/>
            <person name="Komatsu T."/>
            <person name="Mizushima-Sugano J."/>
            <person name="Satoh T."/>
            <person name="Shirai Y."/>
            <person name="Takahashi Y."/>
            <person name="Nakagawa K."/>
            <person name="Okumura K."/>
            <person name="Nagase T."/>
            <person name="Nomura N."/>
            <person name="Kikuchi H."/>
            <person name="Masuho Y."/>
            <person name="Yamashita R."/>
            <person name="Nakai K."/>
            <person name="Yada T."/>
            <person name="Nakamura Y."/>
            <person name="Ohara O."/>
            <person name="Isogai T."/>
            <person name="Sugano S."/>
        </authorList>
    </citation>
    <scope>NUCLEOTIDE SEQUENCE [LARGE SCALE MRNA]</scope>
    <source>
        <tissue>Amygdala</tissue>
    </source>
</reference>
<reference evidence="23" key="4">
    <citation type="submission" date="2005-12" db="EMBL/GenBank/DDBJ databases">
        <authorList>
            <consortium name="NHLBI resequencing and genotyping service (RS&amp;G)"/>
        </authorList>
    </citation>
    <scope>NUCLEOTIDE SEQUENCE [GENOMIC DNA]</scope>
</reference>
<reference key="5">
    <citation type="journal article" date="2004" name="Genome Res.">
        <title>The status, quality, and expansion of the NIH full-length cDNA project: the Mammalian Gene Collection (MGC).</title>
        <authorList>
            <consortium name="The MGC Project Team"/>
        </authorList>
    </citation>
    <scope>NUCLEOTIDE SEQUENCE [LARGE SCALE MRNA]</scope>
    <source>
        <tissue>Uterus</tissue>
    </source>
</reference>
<reference key="6">
    <citation type="journal article" date="2003" name="Mol. Cell. Biol.">
        <title>The TAK1-NLK mitogen-activated protein kinase cascade functions in the Wnt-5a/Ca(2+) pathway to antagonize Wnt/beta-catenin signaling.</title>
        <authorList>
            <person name="Ishitani T."/>
            <person name="Kishida S."/>
            <person name="Hyodo-Miura J."/>
            <person name="Ueno N."/>
            <person name="Yasuda J."/>
            <person name="Waterman M."/>
            <person name="Shibuya H."/>
            <person name="Moon R.T."/>
            <person name="Ninomiya-Tsuji J."/>
            <person name="Matsumoto K."/>
        </authorList>
    </citation>
    <scope>FUNCTION</scope>
    <scope>ACTIVITY REGULATION</scope>
</reference>
<reference key="7">
    <citation type="journal article" date="2004" name="Genes Dev.">
        <title>Role of the TAK1-NLK-STAT3 pathway in TGF-beta-mediated mesoderm induction.</title>
        <authorList>
            <person name="Ohkawara B."/>
            <person name="Shirakabe K."/>
            <person name="Hyodo-Miura J."/>
            <person name="Matsuo R."/>
            <person name="Ueno N."/>
            <person name="Matsumoto K."/>
            <person name="Shibuya H."/>
        </authorList>
    </citation>
    <scope>FUNCTION</scope>
    <scope>ACTIVITY REGULATION</scope>
</reference>
<reference evidence="22" key="8">
    <citation type="journal article" date="2004" name="Genes Dev.">
        <title>Wnt-1 signal induces phosphorylation and degradation of c-Myb protein via TAK1, HIPK2, and NLK.</title>
        <authorList>
            <person name="Kanei-Ishii C."/>
            <person name="Ninomiya-Tsuji J."/>
            <person name="Tanikawa J."/>
            <person name="Nomura T."/>
            <person name="Ishitani T."/>
            <person name="Kishida S."/>
            <person name="Kokura K."/>
            <person name="Kurahashi T."/>
            <person name="Ichikawa-Iwata E."/>
            <person name="Kim Y."/>
            <person name="Matsumoto K."/>
            <person name="Ishii S."/>
        </authorList>
    </citation>
    <scope>FUNCTION</scope>
    <scope>INTERACTION WITH MYB AND HIPK2</scope>
</reference>
<reference key="9">
    <citation type="journal article" date="2004" name="J. Biol. Chem.">
        <title>Wnt activates the Tak1/Nemo-like kinase pathway.</title>
        <authorList>
            <person name="Smit L."/>
            <person name="Baas A."/>
            <person name="Kuipers J."/>
            <person name="Korswagen H."/>
            <person name="van de Wetering M."/>
            <person name="Clevers H."/>
        </authorList>
    </citation>
    <scope>FUNCTION</scope>
</reference>
<reference key="10">
    <citation type="journal article" date="2005" name="Proc. Natl. Acad. Sci. U.S.A.">
        <title>STAT3 regulates Nemo-like kinase by mediating its interaction with IL-6-stimulated TGFbeta-activated kinase 1 for STAT3 Ser-727 phosphorylation.</title>
        <authorList>
            <person name="Kojima H."/>
            <person name="Sasaki T."/>
            <person name="Ishitani T."/>
            <person name="Iemura S."/>
            <person name="Zhao H."/>
            <person name="Kaneko S."/>
            <person name="Kunimoto H."/>
            <person name="Natsume T."/>
            <person name="Matsumoto K."/>
            <person name="Nakajima K."/>
        </authorList>
    </citation>
    <scope>FUNCTION</scope>
    <scope>AUTOPHOSPHORYLATION</scope>
    <scope>INTERACTION WITH MAP3K7 AND STAT3</scope>
    <scope>SUBCELLULAR LOCATION</scope>
</reference>
<reference key="11">
    <citation type="journal article" date="2006" name="J. Biol. Chem.">
        <title>NARF, an nemo-like kinase (NLK)-associated ring finger protein regulates the ubiquitylation and degradation of T cell factor/lymphoid enhancer factor (TCF/LEF).</title>
        <authorList>
            <person name="Yamada M."/>
            <person name="Ohnishi J."/>
            <person name="Ohkawara B."/>
            <person name="Iemura S."/>
            <person name="Satoh K."/>
            <person name="Hyodo-Miura J."/>
            <person name="Kawachi K."/>
            <person name="Natsume T."/>
            <person name="Shibuya H."/>
        </authorList>
    </citation>
    <scope>INTERACTION WITH RNF138 AND TCF7L2</scope>
</reference>
<reference key="12">
    <citation type="journal article" date="2007" name="Nat. Cell Biol.">
        <title>A histone lysine methyltransferase activated by non-canonical Wnt signalling suppresses PPAR-gamma transactivation.</title>
        <authorList>
            <person name="Takada I."/>
            <person name="Mihara M."/>
            <person name="Suzawa M."/>
            <person name="Ohtake F."/>
            <person name="Kobayashi S."/>
            <person name="Igarashi M."/>
            <person name="Youn M.Y."/>
            <person name="Takeyama K."/>
            <person name="Nakamura T."/>
            <person name="Mezaki Y."/>
            <person name="Takezawa S."/>
            <person name="Yogiashi Y."/>
            <person name="Kitagawa H."/>
            <person name="Yamada G."/>
            <person name="Takada S."/>
            <person name="Minami Y."/>
            <person name="Shibuya H."/>
            <person name="Matsumoto K."/>
            <person name="Kato S."/>
        </authorList>
    </citation>
    <scope>RETRACTED PAPER</scope>
</reference>
<reference key="13">
    <citation type="journal article" date="2014" name="Nat. Cell Biol.">
        <authorList>
            <person name="Takada I."/>
            <person name="Mihara M."/>
            <person name="Suzawa M."/>
            <person name="Ohtake F."/>
            <person name="Kobayashi S."/>
            <person name="Igarashi M."/>
            <person name="Youn M.Y."/>
            <person name="Takeyama K."/>
            <person name="Nakamura T."/>
            <person name="Mezaki Y."/>
            <person name="Takezawa S."/>
            <person name="Yogiashi Y."/>
            <person name="Kitagawa H."/>
            <person name="Yamada G."/>
            <person name="Takada S."/>
            <person name="Minami Y."/>
            <person name="Shibuya H."/>
            <person name="Matsumoto K."/>
            <person name="Kato S."/>
        </authorList>
    </citation>
    <scope>RETRACTION NOTICE OF PUBMED:17952062</scope>
</reference>
<reference key="14">
    <citation type="journal article" date="2009" name="Mol. Cell. Proteomics">
        <title>Large-scale proteomics analysis of the human kinome.</title>
        <authorList>
            <person name="Oppermann F.S."/>
            <person name="Gnad F."/>
            <person name="Olsen J.V."/>
            <person name="Hornberger R."/>
            <person name="Greff Z."/>
            <person name="Keri G."/>
            <person name="Mann M."/>
            <person name="Daub H."/>
        </authorList>
    </citation>
    <scope>PHOSPHORYLATION [LARGE SCALE ANALYSIS] AT THR-298 AND SER-522</scope>
    <scope>IDENTIFICATION BY MASS SPECTROMETRY [LARGE SCALE ANALYSIS]</scope>
</reference>
<reference key="15">
    <citation type="journal article" date="2009" name="Sci. Signal.">
        <title>Quantitative phosphoproteomic analysis of T cell receptor signaling reveals system-wide modulation of protein-protein interactions.</title>
        <authorList>
            <person name="Mayya V."/>
            <person name="Lundgren D.H."/>
            <person name="Hwang S.-I."/>
            <person name="Rezaul K."/>
            <person name="Wu L."/>
            <person name="Eng J.K."/>
            <person name="Rodionov V."/>
            <person name="Han D.K."/>
        </authorList>
    </citation>
    <scope>PHOSPHORYLATION [LARGE SCALE ANALYSIS] AT THR-298</scope>
    <scope>IDENTIFICATION BY MASS SPECTROMETRY [LARGE SCALE ANALYSIS]</scope>
    <source>
        <tissue>Leukemic T-cell</tissue>
    </source>
</reference>
<reference key="16">
    <citation type="journal article" date="2010" name="J. Biol. Chem.">
        <title>Regulation of FOXO1 by TAK1-Nemo-like kinase pathway.</title>
        <authorList>
            <person name="Kim S."/>
            <person name="Kim Y."/>
            <person name="Lee J."/>
            <person name="Chung J."/>
        </authorList>
    </citation>
    <scope>FUNCTION</scope>
    <scope>INTERACTION WITH FOXO1</scope>
    <scope>MUTAGENESIS OF LYS-167</scope>
</reference>
<reference key="17">
    <citation type="journal article" date="2010" name="Nat. Cell Biol.">
        <title>Nemo-like kinase suppresses Notch signalling by interfering with formation of the Notch active transcriptional complex.</title>
        <authorList>
            <person name="Ishitani T."/>
            <person name="Hirao T."/>
            <person name="Suzuki M."/>
            <person name="Isoda M."/>
            <person name="Ishitani S."/>
            <person name="Harigaya K."/>
            <person name="Kitagawa M."/>
            <person name="Matsumoto K."/>
            <person name="Itoh M."/>
        </authorList>
    </citation>
    <scope>FUNCTION</scope>
    <scope>INTERACTION WITH NOTCH1</scope>
</reference>
<reference key="18">
    <citation type="journal article" date="2011" name="Antioxid. Redox Signal.">
        <title>Oxidative stress-dependent regulation of Forkhead box O4 activity by nemo-like kinase.</title>
        <authorList>
            <person name="Szypowska A.A."/>
            <person name="de Ruiter H."/>
            <person name="Meijer L.A.T."/>
            <person name="Smits L.M.M."/>
            <person name="Burgering B.M.T."/>
        </authorList>
    </citation>
    <scope>FUNCTION</scope>
    <scope>INTERACTION WITH FOXO1; FOXO3 AND FOXO4</scope>
</reference>
<reference key="19">
    <citation type="journal article" date="2011" name="J. Biol. Chem.">
        <title>Zipper-interacting protein kinase (ZIPK) modulates canonical Wnt/beta-catenin signaling through interaction with Nemo-like kinase and T-cell factor 4 (NLK/TCF4).</title>
        <authorList>
            <person name="Togi S."/>
            <person name="Ikeda O."/>
            <person name="Kamitani S."/>
            <person name="Nakasuji M."/>
            <person name="Sekine Y."/>
            <person name="Muromoto R."/>
            <person name="Nanbo A."/>
            <person name="Oritani K."/>
            <person name="Kawai T."/>
            <person name="Akira S."/>
            <person name="Matsuda T."/>
        </authorList>
    </citation>
    <scope>FUNCTION</scope>
    <scope>INTERACTION WITH DAPK3 AND TCF7L2</scope>
</reference>
<reference key="20">
    <citation type="journal article" date="2013" name="J. Proteome Res.">
        <title>Toward a comprehensive characterization of a human cancer cell phosphoproteome.</title>
        <authorList>
            <person name="Zhou H."/>
            <person name="Di Palma S."/>
            <person name="Preisinger C."/>
            <person name="Peng M."/>
            <person name="Polat A.N."/>
            <person name="Heck A.J."/>
            <person name="Mohammed S."/>
        </authorList>
    </citation>
    <scope>PHOSPHORYLATION [LARGE SCALE ANALYSIS] AT THR-298</scope>
    <scope>IDENTIFICATION BY MASS SPECTROMETRY [LARGE SCALE ANALYSIS]</scope>
    <source>
        <tissue>Erythroleukemia</tissue>
    </source>
</reference>
<reference key="21">
    <citation type="journal article" date="2015" name="Genes Dev.">
        <title>NLK phosphorylates Raptor to mediate stress-induced mTORC1 inhibition.</title>
        <authorList>
            <person name="Yuan H.X."/>
            <person name="Wang Z."/>
            <person name="Yu F.X."/>
            <person name="Li F."/>
            <person name="Russell R.C."/>
            <person name="Jewell J.L."/>
            <person name="Guan K.L."/>
        </authorList>
    </citation>
    <scope>FUNCTION</scope>
    <scope>CATALYTIC ACTIVITY</scope>
</reference>
<reference key="22">
    <citation type="journal article" date="2015" name="Mol. Cell. Biol.">
        <title>Stabilization of ATF5 by TAK1-Nemo-like kinase critically regulates the interleukin-1beta-stimulated C/EBP signaling pathway.</title>
        <authorList>
            <person name="Zhang Z.Y."/>
            <person name="Li S.Z."/>
            <person name="Zhang H.H."/>
            <person name="Wu Q.R."/>
            <person name="Gong J."/>
            <person name="Liang T."/>
            <person name="Gao L."/>
            <person name="Xing N.N."/>
            <person name="Liu W.B."/>
            <person name="Du R.L."/>
            <person name="Zhang X.D."/>
        </authorList>
    </citation>
    <scope>FUNCTION</scope>
    <scope>INTERACTION WITH ATF5</scope>
</reference>
<reference key="23">
    <citation type="journal article" date="2007" name="Nature">
        <title>Patterns of somatic mutation in human cancer genomes.</title>
        <authorList>
            <person name="Greenman C."/>
            <person name="Stephens P."/>
            <person name="Smith R."/>
            <person name="Dalgliesh G.L."/>
            <person name="Hunter C."/>
            <person name="Bignell G."/>
            <person name="Davies H."/>
            <person name="Teague J."/>
            <person name="Butler A."/>
            <person name="Stevens C."/>
            <person name="Edkins S."/>
            <person name="O'Meara S."/>
            <person name="Vastrik I."/>
            <person name="Schmidt E.E."/>
            <person name="Avis T."/>
            <person name="Barthorpe S."/>
            <person name="Bhamra G."/>
            <person name="Buck G."/>
            <person name="Choudhury B."/>
            <person name="Clements J."/>
            <person name="Cole J."/>
            <person name="Dicks E."/>
            <person name="Forbes S."/>
            <person name="Gray K."/>
            <person name="Halliday K."/>
            <person name="Harrison R."/>
            <person name="Hills K."/>
            <person name="Hinton J."/>
            <person name="Jenkinson A."/>
            <person name="Jones D."/>
            <person name="Menzies A."/>
            <person name="Mironenko T."/>
            <person name="Perry J."/>
            <person name="Raine K."/>
            <person name="Richardson D."/>
            <person name="Shepherd R."/>
            <person name="Small A."/>
            <person name="Tofts C."/>
            <person name="Varian J."/>
            <person name="Webb T."/>
            <person name="West S."/>
            <person name="Widaa S."/>
            <person name="Yates A."/>
            <person name="Cahill D.P."/>
            <person name="Louis D.N."/>
            <person name="Goldstraw P."/>
            <person name="Nicholson A.G."/>
            <person name="Brasseur F."/>
            <person name="Looijenga L."/>
            <person name="Weber B.L."/>
            <person name="Chiew Y.-E."/>
            <person name="DeFazio A."/>
            <person name="Greaves M.F."/>
            <person name="Green A.R."/>
            <person name="Campbell P."/>
            <person name="Birney E."/>
            <person name="Easton D.F."/>
            <person name="Chenevix-Trench G."/>
            <person name="Tan M.-H."/>
            <person name="Khoo S.K."/>
            <person name="Teh B.T."/>
            <person name="Yuen S.T."/>
            <person name="Leung S.Y."/>
            <person name="Wooster R."/>
            <person name="Futreal P.A."/>
            <person name="Stratton M.R."/>
        </authorList>
    </citation>
    <scope>VARIANT [LARGE SCALE ANALYSIS] THR-343</scope>
</reference>
<comment type="function">
    <text evidence="7 8 9 10 11 15 16 17 18 20 21">Serine/threonine-protein kinase that regulates a number of transcription factors with key roles in cell fate determination (PubMed:12482967, PubMed:14960582, PubMed:15004007, PubMed:15764709, PubMed:20061393, PubMed:20874444, PubMed:21454679). Positive effector of the non-canonical Wnt signaling pathway, acting downstream of WNT5A, MAP3K7/TAK1 and HIPK2 (PubMed:15004007, PubMed:15764709). Negative regulator of the canonical Wnt/beta-catenin signaling pathway (PubMed:12482967). Binds to and phosphorylates TCF7L2/TCF4 and LEF1, promoting the dissociation of the TCF7L2/LEF1/beta-catenin complex from DNA, as well as the ubiquitination and subsequent proteolysis of LEF1 (PubMed:21454679). Together these effects inhibit the transcriptional activation of canonical Wnt/beta-catenin target genes (PubMed:12482967, PubMed:21454679). Negative regulator of the Notch signaling pathway (PubMed:20118921). Binds to and phosphorylates NOTCH1, thereby preventing the formation of a transcriptionally active ternary complex of NOTCH1, RBPJ/RBPSUH and MAML1 (PubMed:20118921). Negative regulator of the MYB family of transcription factors (PubMed:15082531). Phosphorylation of MYB leads to its subsequent proteolysis while phosphorylation of MYBL1 and MYBL2 inhibits their interaction with the coactivator CREBBP (PubMed:15082531). Other transcription factors may also be inhibited by direct phosphorylation of CREBBP itself (PubMed:15082531). Acts downstream of IL6 and MAP3K7/TAK1 to phosphorylate STAT3, which is in turn required for activation of NLK by MAP3K7/TAK1 (PubMed:15004007, PubMed:15764709). Upon IL1B stimulus, cooperates with ATF5 to activate the transactivation activity of C/EBP subfamily members (PubMed:25512613). Phosphorylates ATF5 but also stabilizes ATF5 protein levels in a kinase-independent manner (PubMed:25512613). Acts as an inhibitor of the mTORC1 complex in response to osmotic stress by mediating phosphorylation of RPTOR, thereby preventing recruitment of the mTORC1 complex to lysosomes (PubMed:26588989).</text>
</comment>
<comment type="catalytic activity">
    <reaction evidence="21">
        <text>L-seryl-[protein] + ATP = O-phospho-L-seryl-[protein] + ADP + H(+)</text>
        <dbReference type="Rhea" id="RHEA:17989"/>
        <dbReference type="Rhea" id="RHEA-COMP:9863"/>
        <dbReference type="Rhea" id="RHEA-COMP:11604"/>
        <dbReference type="ChEBI" id="CHEBI:15378"/>
        <dbReference type="ChEBI" id="CHEBI:29999"/>
        <dbReference type="ChEBI" id="CHEBI:30616"/>
        <dbReference type="ChEBI" id="CHEBI:83421"/>
        <dbReference type="ChEBI" id="CHEBI:456216"/>
        <dbReference type="EC" id="2.7.11.24"/>
    </reaction>
</comment>
<comment type="catalytic activity">
    <reaction>
        <text>L-threonyl-[protein] + ATP = O-phospho-L-threonyl-[protein] + ADP + H(+)</text>
        <dbReference type="Rhea" id="RHEA:46608"/>
        <dbReference type="Rhea" id="RHEA-COMP:11060"/>
        <dbReference type="Rhea" id="RHEA-COMP:11605"/>
        <dbReference type="ChEBI" id="CHEBI:15378"/>
        <dbReference type="ChEBI" id="CHEBI:30013"/>
        <dbReference type="ChEBI" id="CHEBI:30616"/>
        <dbReference type="ChEBI" id="CHEBI:61977"/>
        <dbReference type="ChEBI" id="CHEBI:456216"/>
        <dbReference type="EC" id="2.7.11.24"/>
    </reaction>
</comment>
<comment type="cofactor">
    <cofactor evidence="2">
        <name>Mg(2+)</name>
        <dbReference type="ChEBI" id="CHEBI:18420"/>
    </cofactor>
</comment>
<comment type="activity regulation">
    <text evidence="1 7 9">Activated by dimerization and subsequent intermolecular autophosphorylation on Thr-298 (By similarity). Activated by the non-canonical Wnt signaling pathway, in which WNT5A treatment leads to activation of MAP3K7/TAK1 and HIPK2, which subsequently phosphorylates and activates this protein. Other cytokines such as IL6 may also activate this regulatory circuit.</text>
</comment>
<comment type="subunit">
    <text evidence="2 10 11 12 15 16 17 18 20">Homodimer. Homodimerization is required for intermolecular autophosphorylation, kinase activation and nuclear localization (By similarity). May interact with components of cullin-RING-based SCF (SKP1-CUL1-F-box protein) E3 ubiquitin-protein ligase complexes (By similarity). Interacts with LEF1, MEF2A, MYBL1 and MYBL2 (By similarity). Interacts with the upstream activating kinases HIPK2 and MAP3K7/TAK1. Interaction with MAP3K7/TAK1 seems to be indirect, and may be mediated by other proteins such as STAT3, TAB1 and TAB2. Interacts with and phosphorylates a number of transcription factors including FOXO1, FOXO3, FOXO4, MYB, NOTCH1 and TCF7L2/TCF4. Interacts with DAPK3/ZIPK, and this interaction may disrupt interaction with transcription factors such as TCF7L2/TCF4. Interacts with RNF138/NARF. Interacts with ATF5; the interaction stabilizes ATF5 at the protein level in a kinase-independent manner (PubMed:25512613).</text>
</comment>
<comment type="interaction">
    <interactant intactId="EBI-366978">
        <id>Q9UBE8</id>
    </interactant>
    <interactant intactId="EBI-930964">
        <id>P54253</id>
        <label>ATXN1</label>
    </interactant>
    <organismsDiffer>false</organismsDiffer>
    <experiments>4</experiments>
</comment>
<comment type="interaction">
    <interactant intactId="EBI-366978">
        <id>Q9UBE8</id>
    </interactant>
    <interactant intactId="EBI-77293">
        <id>O43293</id>
        <label>DAPK3</label>
    </interactant>
    <organismsDiffer>false</organismsDiffer>
    <experiments>3</experiments>
</comment>
<comment type="interaction">
    <interactant intactId="EBI-366978">
        <id>Q9UBE8</id>
    </interactant>
    <interactant intactId="EBI-747754">
        <id>P28799</id>
        <label>GRN</label>
    </interactant>
    <organismsDiffer>false</organismsDiffer>
    <experiments>7</experiments>
</comment>
<comment type="interaction">
    <interactant intactId="EBI-366978">
        <id>Q9UBE8</id>
    </interactant>
    <interactant intactId="EBI-466029">
        <id>P42858</id>
        <label>HTT</label>
    </interactant>
    <organismsDiffer>false</organismsDiffer>
    <experiments>3</experiments>
</comment>
<comment type="interaction">
    <interactant intactId="EBI-366978">
        <id>Q9UBE8</id>
    </interactant>
    <interactant intactId="EBI-10172511">
        <id>Q9BYR5</id>
        <label>KRTAP4-2</label>
    </interactant>
    <organismsDiffer>false</organismsDiffer>
    <experiments>3</experiments>
</comment>
<comment type="interaction">
    <interactant intactId="EBI-366978">
        <id>Q9UBE8</id>
    </interactant>
    <interactant intactId="EBI-10250562">
        <id>Q6L8G9</id>
        <label>KRTAP5-6</label>
    </interactant>
    <organismsDiffer>false</organismsDiffer>
    <experiments>3</experiments>
</comment>
<comment type="interaction">
    <interactant intactId="EBI-366978">
        <id>Q9UBE8</id>
    </interactant>
    <interactant intactId="EBI-3958099">
        <id>P26371</id>
        <label>KRTAP5-9</label>
    </interactant>
    <organismsDiffer>false</organismsDiffer>
    <experiments>3</experiments>
</comment>
<comment type="interaction">
    <interactant intactId="EBI-366978">
        <id>Q9UBE8</id>
    </interactant>
    <interactant intactId="EBI-10249760">
        <id>Q9UHB4</id>
        <label>NDOR1</label>
    </interactant>
    <organismsDiffer>false</organismsDiffer>
    <experiments>3</experiments>
</comment>
<comment type="interaction">
    <interactant intactId="EBI-366978">
        <id>Q9UBE8</id>
    </interactant>
    <interactant intactId="EBI-2798044">
        <id>Q2TAL8</id>
        <label>QRICH1</label>
    </interactant>
    <organismsDiffer>false</organismsDiffer>
    <experiments>3</experiments>
</comment>
<comment type="interaction">
    <interactant intactId="EBI-366978">
        <id>Q9UBE8</id>
    </interactant>
    <interactant intactId="EBI-947779">
        <id>Q96PM5</id>
        <label>RCHY1</label>
    </interactant>
    <organismsDiffer>false</organismsDiffer>
    <experiments>5</experiments>
</comment>
<comment type="interaction">
    <interactant intactId="EBI-366978">
        <id>Q9UBE8</id>
    </interactant>
    <interactant intactId="EBI-347263">
        <id>Q13485</id>
        <label>SMAD4</label>
    </interactant>
    <organismsDiffer>false</organismsDiffer>
    <experiments>6</experiments>
</comment>
<comment type="interaction">
    <interactant intactId="EBI-366978">
        <id>Q9UBE8</id>
    </interactant>
    <interactant intactId="EBI-749713">
        <id>Q14186</id>
        <label>TFDP1</label>
    </interactant>
    <organismsDiffer>false</organismsDiffer>
    <experiments>2</experiments>
</comment>
<comment type="interaction">
    <interactant intactId="EBI-366978">
        <id>Q9UBE8</id>
    </interactant>
    <interactant intactId="EBI-948582">
        <id>Q9H4I2</id>
        <label>ZHX3</label>
    </interactant>
    <organismsDiffer>false</organismsDiffer>
    <experiments>4</experiments>
</comment>
<comment type="interaction">
    <interactant intactId="EBI-366978">
        <id>Q9UBE8</id>
    </interactant>
    <interactant intactId="EBI-10693326">
        <id>Q9H4I2-2</id>
        <label>ZHX3</label>
    </interactant>
    <organismsDiffer>false</organismsDiffer>
    <experiments>3</experiments>
</comment>
<comment type="subcellular location">
    <subcellularLocation>
        <location evidence="2">Nucleus</location>
    </subcellularLocation>
    <subcellularLocation>
        <location evidence="2">Cytoplasm</location>
    </subcellularLocation>
    <text evidence="2">Predominantly nuclear. A smaller fraction is cytoplasmic.</text>
</comment>
<comment type="domain">
    <text evidence="2">Contains a TQE activation loop motif in which autophosphorylation of the threonine residue (Thr-298) is sufficient for kinase activation. This mode of activation contrasts with that of classical MAP kinases, which contain a TXY activation loop motif in which phosphorylation of both the threonine and tyrosine residues is required for kinase activation.</text>
</comment>
<comment type="PTM">
    <text evidence="2">Phosphorylated on Thr-298. Intermolecular autophosphorylation on Thr-298 activates the enzyme.</text>
</comment>
<comment type="similarity">
    <text evidence="22">Belongs to the protein kinase superfamily. CMGC Ser/Thr protein kinase family. MAP kinase subfamily.</text>
</comment>
<comment type="caution">
    <text evidence="14 19">Was reported to form a transcriptional repressor complex with CHD7 and SETDB1 involved in PPARG repression (PubMed:17952062). However, this work was later retracted (PubMed:25358353).</text>
</comment>
<comment type="sequence caution" evidence="22">
    <conflict type="erroneous initiation">
        <sequence resource="EMBL-CDS" id="AAD56013"/>
    </conflict>
    <text>Truncated N-terminus.</text>
</comment>
<comment type="sequence caution" evidence="22">
    <conflict type="erroneous initiation">
        <sequence resource="EMBL-CDS" id="AAF04857"/>
    </conflict>
    <text>Truncated N-terminus.</text>
</comment>
<comment type="sequence caution" evidence="22">
    <conflict type="erroneous initiation">
        <sequence resource="EMBL-CDS" id="ABC40748"/>
    </conflict>
    <text>Truncated N-terminus.</text>
</comment>
<comment type="sequence caution" evidence="22">
    <conflict type="erroneous initiation">
        <sequence resource="EMBL-CDS" id="BAG37718"/>
    </conflict>
    <text>Truncated N-terminus.</text>
</comment>
<keyword id="KW-0067">ATP-binding</keyword>
<keyword id="KW-0963">Cytoplasm</keyword>
<keyword id="KW-0418">Kinase</keyword>
<keyword id="KW-0460">Magnesium</keyword>
<keyword id="KW-0479">Metal-binding</keyword>
<keyword id="KW-0547">Nucleotide-binding</keyword>
<keyword id="KW-0539">Nucleus</keyword>
<keyword id="KW-0597">Phosphoprotein</keyword>
<keyword id="KW-1267">Proteomics identification</keyword>
<keyword id="KW-1185">Reference proteome</keyword>
<keyword id="KW-0723">Serine/threonine-protein kinase</keyword>
<keyword id="KW-0804">Transcription</keyword>
<keyword id="KW-0805">Transcription regulation</keyword>
<keyword id="KW-0808">Transferase</keyword>
<keyword id="KW-0879">Wnt signaling pathway</keyword>
<organism>
    <name type="scientific">Homo sapiens</name>
    <name type="common">Human</name>
    <dbReference type="NCBI Taxonomy" id="9606"/>
    <lineage>
        <taxon>Eukaryota</taxon>
        <taxon>Metazoa</taxon>
        <taxon>Chordata</taxon>
        <taxon>Craniata</taxon>
        <taxon>Vertebrata</taxon>
        <taxon>Euteleostomi</taxon>
        <taxon>Mammalia</taxon>
        <taxon>Eutheria</taxon>
        <taxon>Euarchontoglires</taxon>
        <taxon>Primates</taxon>
        <taxon>Haplorrhini</taxon>
        <taxon>Catarrhini</taxon>
        <taxon>Hominidae</taxon>
        <taxon>Homo</taxon>
    </lineage>
</organism>